<feature type="chain" id="PRO_1000143745" description="Large ribosomal subunit protein bL21">
    <location>
        <begin position="1"/>
        <end position="103"/>
    </location>
</feature>
<dbReference type="EMBL" id="CP001219">
    <property type="protein sequence ID" value="ACK79503.1"/>
    <property type="molecule type" value="Genomic_DNA"/>
</dbReference>
<dbReference type="RefSeq" id="WP_009565805.1">
    <property type="nucleotide sequence ID" value="NC_011761.1"/>
</dbReference>
<dbReference type="SMR" id="B7J429"/>
<dbReference type="STRING" id="243159.AFE_0285"/>
<dbReference type="PaxDb" id="243159-AFE_0285"/>
<dbReference type="GeneID" id="65279667"/>
<dbReference type="KEGG" id="afr:AFE_0285"/>
<dbReference type="eggNOG" id="COG0261">
    <property type="taxonomic scope" value="Bacteria"/>
</dbReference>
<dbReference type="HOGENOM" id="CLU_061463_3_2_6"/>
<dbReference type="Proteomes" id="UP000001362">
    <property type="component" value="Chromosome"/>
</dbReference>
<dbReference type="GO" id="GO:0005737">
    <property type="term" value="C:cytoplasm"/>
    <property type="evidence" value="ECO:0007669"/>
    <property type="project" value="UniProtKB-ARBA"/>
</dbReference>
<dbReference type="GO" id="GO:1990904">
    <property type="term" value="C:ribonucleoprotein complex"/>
    <property type="evidence" value="ECO:0007669"/>
    <property type="project" value="UniProtKB-KW"/>
</dbReference>
<dbReference type="GO" id="GO:0005840">
    <property type="term" value="C:ribosome"/>
    <property type="evidence" value="ECO:0007669"/>
    <property type="project" value="UniProtKB-KW"/>
</dbReference>
<dbReference type="GO" id="GO:0019843">
    <property type="term" value="F:rRNA binding"/>
    <property type="evidence" value="ECO:0007669"/>
    <property type="project" value="UniProtKB-UniRule"/>
</dbReference>
<dbReference type="GO" id="GO:0003735">
    <property type="term" value="F:structural constituent of ribosome"/>
    <property type="evidence" value="ECO:0007669"/>
    <property type="project" value="InterPro"/>
</dbReference>
<dbReference type="GO" id="GO:0006412">
    <property type="term" value="P:translation"/>
    <property type="evidence" value="ECO:0007669"/>
    <property type="project" value="UniProtKB-UniRule"/>
</dbReference>
<dbReference type="HAMAP" id="MF_01363">
    <property type="entry name" value="Ribosomal_bL21"/>
    <property type="match status" value="1"/>
</dbReference>
<dbReference type="InterPro" id="IPR028909">
    <property type="entry name" value="bL21-like"/>
</dbReference>
<dbReference type="InterPro" id="IPR036164">
    <property type="entry name" value="bL21-like_sf"/>
</dbReference>
<dbReference type="InterPro" id="IPR001787">
    <property type="entry name" value="Ribosomal_bL21"/>
</dbReference>
<dbReference type="InterPro" id="IPR018258">
    <property type="entry name" value="Ribosomal_bL21_CS"/>
</dbReference>
<dbReference type="NCBIfam" id="TIGR00061">
    <property type="entry name" value="L21"/>
    <property type="match status" value="1"/>
</dbReference>
<dbReference type="PANTHER" id="PTHR21349">
    <property type="entry name" value="50S RIBOSOMAL PROTEIN L21"/>
    <property type="match status" value="1"/>
</dbReference>
<dbReference type="PANTHER" id="PTHR21349:SF0">
    <property type="entry name" value="LARGE RIBOSOMAL SUBUNIT PROTEIN BL21M"/>
    <property type="match status" value="1"/>
</dbReference>
<dbReference type="Pfam" id="PF00829">
    <property type="entry name" value="Ribosomal_L21p"/>
    <property type="match status" value="1"/>
</dbReference>
<dbReference type="SUPFAM" id="SSF141091">
    <property type="entry name" value="L21p-like"/>
    <property type="match status" value="1"/>
</dbReference>
<dbReference type="PROSITE" id="PS01169">
    <property type="entry name" value="RIBOSOMAL_L21"/>
    <property type="match status" value="1"/>
</dbReference>
<protein>
    <recommendedName>
        <fullName evidence="1">Large ribosomal subunit protein bL21</fullName>
    </recommendedName>
    <alternativeName>
        <fullName evidence="2">50S ribosomal protein L21</fullName>
    </alternativeName>
</protein>
<reference key="1">
    <citation type="journal article" date="2008" name="BMC Genomics">
        <title>Acidithiobacillus ferrooxidans metabolism: from genome sequence to industrial applications.</title>
        <authorList>
            <person name="Valdes J."/>
            <person name="Pedroso I."/>
            <person name="Quatrini R."/>
            <person name="Dodson R.J."/>
            <person name="Tettelin H."/>
            <person name="Blake R. II"/>
            <person name="Eisen J.A."/>
            <person name="Holmes D.S."/>
        </authorList>
    </citation>
    <scope>NUCLEOTIDE SEQUENCE [LARGE SCALE GENOMIC DNA]</scope>
    <source>
        <strain>ATCC 23270 / DSM 14882 / CIP 104768 / NCIMB 8455</strain>
    </source>
</reference>
<evidence type="ECO:0000255" key="1">
    <source>
        <dbReference type="HAMAP-Rule" id="MF_01363"/>
    </source>
</evidence>
<evidence type="ECO:0000305" key="2"/>
<organism>
    <name type="scientific">Acidithiobacillus ferrooxidans (strain ATCC 23270 / DSM 14882 / CIP 104768 / NCIMB 8455)</name>
    <name type="common">Ferrobacillus ferrooxidans (strain ATCC 23270)</name>
    <dbReference type="NCBI Taxonomy" id="243159"/>
    <lineage>
        <taxon>Bacteria</taxon>
        <taxon>Pseudomonadati</taxon>
        <taxon>Pseudomonadota</taxon>
        <taxon>Acidithiobacillia</taxon>
        <taxon>Acidithiobacillales</taxon>
        <taxon>Acidithiobacillaceae</taxon>
        <taxon>Acidithiobacillus</taxon>
    </lineage>
</organism>
<gene>
    <name evidence="1" type="primary">rplU</name>
    <name type="ordered locus">AFE_0285</name>
</gene>
<name>RL21_ACIF2</name>
<comment type="function">
    <text evidence="1">This protein binds to 23S rRNA in the presence of protein L20.</text>
</comment>
<comment type="subunit">
    <text evidence="1">Part of the 50S ribosomal subunit. Contacts protein L20.</text>
</comment>
<comment type="similarity">
    <text evidence="1">Belongs to the bacterial ribosomal protein bL21 family.</text>
</comment>
<accession>B7J429</accession>
<proteinExistence type="inferred from homology"/>
<keyword id="KW-1185">Reference proteome</keyword>
<keyword id="KW-0687">Ribonucleoprotein</keyword>
<keyword id="KW-0689">Ribosomal protein</keyword>
<keyword id="KW-0694">RNA-binding</keyword>
<keyword id="KW-0699">rRNA-binding</keyword>
<sequence>MYAVIENGGKQYRVTVGDKLRLERMEMEPGAELALDRVLMVGVGDDVQVGRPLVEGAAVKATVLSQGRAKKVHIFKMRRRKHYRKQQGHRQYFTEVRITGIEA</sequence>